<feature type="chain" id="PRO_0000137081" description="Nucleoside diphosphate kinase">
    <location>
        <begin position="1"/>
        <end position="141"/>
    </location>
</feature>
<feature type="active site" description="Pros-phosphohistidine intermediate" evidence="1">
    <location>
        <position position="117"/>
    </location>
</feature>
<feature type="binding site" evidence="1">
    <location>
        <position position="11"/>
    </location>
    <ligand>
        <name>ATP</name>
        <dbReference type="ChEBI" id="CHEBI:30616"/>
    </ligand>
</feature>
<feature type="binding site" evidence="1">
    <location>
        <position position="59"/>
    </location>
    <ligand>
        <name>ATP</name>
        <dbReference type="ChEBI" id="CHEBI:30616"/>
    </ligand>
</feature>
<feature type="binding site" evidence="1">
    <location>
        <position position="87"/>
    </location>
    <ligand>
        <name>ATP</name>
        <dbReference type="ChEBI" id="CHEBI:30616"/>
    </ligand>
</feature>
<feature type="binding site" evidence="1">
    <location>
        <position position="93"/>
    </location>
    <ligand>
        <name>ATP</name>
        <dbReference type="ChEBI" id="CHEBI:30616"/>
    </ligand>
</feature>
<feature type="binding site" evidence="1">
    <location>
        <position position="104"/>
    </location>
    <ligand>
        <name>ATP</name>
        <dbReference type="ChEBI" id="CHEBI:30616"/>
    </ligand>
</feature>
<feature type="binding site" evidence="1">
    <location>
        <position position="114"/>
    </location>
    <ligand>
        <name>ATP</name>
        <dbReference type="ChEBI" id="CHEBI:30616"/>
    </ligand>
</feature>
<organism>
    <name type="scientific">Xanthomonas oryzae pv. oryzae (strain KACC10331 / KXO85)</name>
    <dbReference type="NCBI Taxonomy" id="291331"/>
    <lineage>
        <taxon>Bacteria</taxon>
        <taxon>Pseudomonadati</taxon>
        <taxon>Pseudomonadota</taxon>
        <taxon>Gammaproteobacteria</taxon>
        <taxon>Lysobacterales</taxon>
        <taxon>Lysobacteraceae</taxon>
        <taxon>Xanthomonas</taxon>
    </lineage>
</organism>
<protein>
    <recommendedName>
        <fullName evidence="1">Nucleoside diphosphate kinase</fullName>
        <shortName evidence="1">NDK</shortName>
        <shortName evidence="1">NDP kinase</shortName>
        <ecNumber evidence="1">2.7.4.6</ecNumber>
    </recommendedName>
    <alternativeName>
        <fullName evidence="1">Nucleoside-2-P kinase</fullName>
    </alternativeName>
</protein>
<accession>Q5GZT2</accession>
<sequence>MALERTLSIIKPDAVAKNVIGEIYSRFEKAGLKVVAAKYKQLSRREAEGFYAVHRERPFFNALVEFMISGPVMIQALEGENAVAAHRDLLGATNPKDAAPGTIRADFADSIDANAAHGSDSVENAANEVAYFFAATEVVSR</sequence>
<comment type="function">
    <text evidence="1">Major role in the synthesis of nucleoside triphosphates other than ATP. The ATP gamma phosphate is transferred to the NDP beta phosphate via a ping-pong mechanism, using a phosphorylated active-site intermediate.</text>
</comment>
<comment type="catalytic activity">
    <reaction evidence="1">
        <text>a 2'-deoxyribonucleoside 5'-diphosphate + ATP = a 2'-deoxyribonucleoside 5'-triphosphate + ADP</text>
        <dbReference type="Rhea" id="RHEA:44640"/>
        <dbReference type="ChEBI" id="CHEBI:30616"/>
        <dbReference type="ChEBI" id="CHEBI:61560"/>
        <dbReference type="ChEBI" id="CHEBI:73316"/>
        <dbReference type="ChEBI" id="CHEBI:456216"/>
        <dbReference type="EC" id="2.7.4.6"/>
    </reaction>
</comment>
<comment type="catalytic activity">
    <reaction evidence="1">
        <text>a ribonucleoside 5'-diphosphate + ATP = a ribonucleoside 5'-triphosphate + ADP</text>
        <dbReference type="Rhea" id="RHEA:18113"/>
        <dbReference type="ChEBI" id="CHEBI:30616"/>
        <dbReference type="ChEBI" id="CHEBI:57930"/>
        <dbReference type="ChEBI" id="CHEBI:61557"/>
        <dbReference type="ChEBI" id="CHEBI:456216"/>
        <dbReference type="EC" id="2.7.4.6"/>
    </reaction>
</comment>
<comment type="cofactor">
    <cofactor evidence="1">
        <name>Mg(2+)</name>
        <dbReference type="ChEBI" id="CHEBI:18420"/>
    </cofactor>
</comment>
<comment type="subunit">
    <text evidence="1">Homotetramer.</text>
</comment>
<comment type="subcellular location">
    <subcellularLocation>
        <location evidence="1">Cytoplasm</location>
    </subcellularLocation>
</comment>
<comment type="similarity">
    <text evidence="1">Belongs to the NDK family.</text>
</comment>
<dbReference type="EC" id="2.7.4.6" evidence="1"/>
<dbReference type="EMBL" id="AE013598">
    <property type="protein sequence ID" value="AAW75789.1"/>
    <property type="molecule type" value="Genomic_DNA"/>
</dbReference>
<dbReference type="SMR" id="Q5GZT2"/>
<dbReference type="STRING" id="291331.XOO2535"/>
<dbReference type="KEGG" id="xoo:XOO2535"/>
<dbReference type="HOGENOM" id="CLU_060216_8_1_6"/>
<dbReference type="Proteomes" id="UP000006735">
    <property type="component" value="Chromosome"/>
</dbReference>
<dbReference type="GO" id="GO:0005737">
    <property type="term" value="C:cytoplasm"/>
    <property type="evidence" value="ECO:0007669"/>
    <property type="project" value="UniProtKB-SubCell"/>
</dbReference>
<dbReference type="GO" id="GO:0005524">
    <property type="term" value="F:ATP binding"/>
    <property type="evidence" value="ECO:0007669"/>
    <property type="project" value="UniProtKB-UniRule"/>
</dbReference>
<dbReference type="GO" id="GO:0046872">
    <property type="term" value="F:metal ion binding"/>
    <property type="evidence" value="ECO:0007669"/>
    <property type="project" value="UniProtKB-KW"/>
</dbReference>
<dbReference type="GO" id="GO:0004550">
    <property type="term" value="F:nucleoside diphosphate kinase activity"/>
    <property type="evidence" value="ECO:0007669"/>
    <property type="project" value="UniProtKB-UniRule"/>
</dbReference>
<dbReference type="GO" id="GO:0006241">
    <property type="term" value="P:CTP biosynthetic process"/>
    <property type="evidence" value="ECO:0007669"/>
    <property type="project" value="UniProtKB-UniRule"/>
</dbReference>
<dbReference type="GO" id="GO:0006183">
    <property type="term" value="P:GTP biosynthetic process"/>
    <property type="evidence" value="ECO:0007669"/>
    <property type="project" value="UniProtKB-UniRule"/>
</dbReference>
<dbReference type="GO" id="GO:0006228">
    <property type="term" value="P:UTP biosynthetic process"/>
    <property type="evidence" value="ECO:0007669"/>
    <property type="project" value="UniProtKB-UniRule"/>
</dbReference>
<dbReference type="CDD" id="cd04413">
    <property type="entry name" value="NDPk_I"/>
    <property type="match status" value="1"/>
</dbReference>
<dbReference type="FunFam" id="3.30.70.141:FF:000001">
    <property type="entry name" value="Nucleoside diphosphate kinase"/>
    <property type="match status" value="1"/>
</dbReference>
<dbReference type="Gene3D" id="3.30.70.141">
    <property type="entry name" value="Nucleoside diphosphate kinase-like domain"/>
    <property type="match status" value="1"/>
</dbReference>
<dbReference type="HAMAP" id="MF_00451">
    <property type="entry name" value="NDP_kinase"/>
    <property type="match status" value="1"/>
</dbReference>
<dbReference type="InterPro" id="IPR034907">
    <property type="entry name" value="NDK-like_dom"/>
</dbReference>
<dbReference type="InterPro" id="IPR036850">
    <property type="entry name" value="NDK-like_dom_sf"/>
</dbReference>
<dbReference type="InterPro" id="IPR001564">
    <property type="entry name" value="Nucleoside_diP_kinase"/>
</dbReference>
<dbReference type="InterPro" id="IPR023005">
    <property type="entry name" value="Nucleoside_diP_kinase_AS"/>
</dbReference>
<dbReference type="NCBIfam" id="NF001908">
    <property type="entry name" value="PRK00668.1"/>
    <property type="match status" value="1"/>
</dbReference>
<dbReference type="PANTHER" id="PTHR11349">
    <property type="entry name" value="NUCLEOSIDE DIPHOSPHATE KINASE"/>
    <property type="match status" value="1"/>
</dbReference>
<dbReference type="Pfam" id="PF00334">
    <property type="entry name" value="NDK"/>
    <property type="match status" value="1"/>
</dbReference>
<dbReference type="PRINTS" id="PR01243">
    <property type="entry name" value="NUCDPKINASE"/>
</dbReference>
<dbReference type="SMART" id="SM00562">
    <property type="entry name" value="NDK"/>
    <property type="match status" value="1"/>
</dbReference>
<dbReference type="SUPFAM" id="SSF54919">
    <property type="entry name" value="Nucleoside diphosphate kinase, NDK"/>
    <property type="match status" value="1"/>
</dbReference>
<dbReference type="PROSITE" id="PS00469">
    <property type="entry name" value="NDPK"/>
    <property type="match status" value="1"/>
</dbReference>
<dbReference type="PROSITE" id="PS51374">
    <property type="entry name" value="NDPK_LIKE"/>
    <property type="match status" value="1"/>
</dbReference>
<proteinExistence type="inferred from homology"/>
<gene>
    <name evidence="1" type="primary">ndk</name>
    <name type="ordered locus">XOO2535</name>
</gene>
<name>NDK_XANOR</name>
<keyword id="KW-0067">ATP-binding</keyword>
<keyword id="KW-0963">Cytoplasm</keyword>
<keyword id="KW-0418">Kinase</keyword>
<keyword id="KW-0460">Magnesium</keyword>
<keyword id="KW-0479">Metal-binding</keyword>
<keyword id="KW-0546">Nucleotide metabolism</keyword>
<keyword id="KW-0547">Nucleotide-binding</keyword>
<keyword id="KW-0597">Phosphoprotein</keyword>
<keyword id="KW-1185">Reference proteome</keyword>
<keyword id="KW-0808">Transferase</keyword>
<evidence type="ECO:0000255" key="1">
    <source>
        <dbReference type="HAMAP-Rule" id="MF_00451"/>
    </source>
</evidence>
<reference key="1">
    <citation type="journal article" date="2005" name="Nucleic Acids Res.">
        <title>The genome sequence of Xanthomonas oryzae pathovar oryzae KACC10331, the bacterial blight pathogen of rice.</title>
        <authorList>
            <person name="Lee B.-M."/>
            <person name="Park Y.-J."/>
            <person name="Park D.-S."/>
            <person name="Kang H.-W."/>
            <person name="Kim J.-G."/>
            <person name="Song E.-S."/>
            <person name="Park I.-C."/>
            <person name="Yoon U.-H."/>
            <person name="Hahn J.-H."/>
            <person name="Koo B.-S."/>
            <person name="Lee G.-B."/>
            <person name="Kim H."/>
            <person name="Park H.-S."/>
            <person name="Yoon K.-O."/>
            <person name="Kim J.-H."/>
            <person name="Jung C.-H."/>
            <person name="Koh N.-H."/>
            <person name="Seo J.-S."/>
            <person name="Go S.-J."/>
        </authorList>
    </citation>
    <scope>NUCLEOTIDE SEQUENCE [LARGE SCALE GENOMIC DNA]</scope>
    <source>
        <strain>KACC10331 / KXO85</strain>
    </source>
</reference>